<comment type="function">
    <text evidence="1">Produces ATP from ADP in the presence of a proton gradient across the membrane.</text>
</comment>
<comment type="subunit">
    <text evidence="1">F-type ATPases have 2 components, CF(1) - the catalytic core - and CF(0) - the membrane proton channel. CF(1) has five subunits: alpha(3), beta(3), gamma(1), delta(1), epsilon(1). CF(0) has three main subunits: a, b and c.</text>
</comment>
<comment type="subcellular location">
    <subcellularLocation>
        <location evidence="1">Cell membrane</location>
        <topology evidence="1">Peripheral membrane protein</topology>
    </subcellularLocation>
</comment>
<comment type="similarity">
    <text evidence="1">Belongs to the ATPase epsilon chain family.</text>
</comment>
<organism>
    <name type="scientific">Streptococcus equi subsp. equi (strain 4047)</name>
    <dbReference type="NCBI Taxonomy" id="553482"/>
    <lineage>
        <taxon>Bacteria</taxon>
        <taxon>Bacillati</taxon>
        <taxon>Bacillota</taxon>
        <taxon>Bacilli</taxon>
        <taxon>Lactobacillales</taxon>
        <taxon>Streptococcaceae</taxon>
        <taxon>Streptococcus</taxon>
    </lineage>
</organism>
<dbReference type="EMBL" id="FM204883">
    <property type="protein sequence ID" value="CAW93439.1"/>
    <property type="molecule type" value="Genomic_DNA"/>
</dbReference>
<dbReference type="RefSeq" id="WP_012679393.1">
    <property type="nucleotide sequence ID" value="NC_012471.1"/>
</dbReference>
<dbReference type="SMR" id="C0M721"/>
<dbReference type="KEGG" id="seu:SEQ_0922"/>
<dbReference type="HOGENOM" id="CLU_084338_1_0_9"/>
<dbReference type="OrthoDB" id="9804110at2"/>
<dbReference type="Proteomes" id="UP000001365">
    <property type="component" value="Chromosome"/>
</dbReference>
<dbReference type="GO" id="GO:0005886">
    <property type="term" value="C:plasma membrane"/>
    <property type="evidence" value="ECO:0007669"/>
    <property type="project" value="UniProtKB-SubCell"/>
</dbReference>
<dbReference type="GO" id="GO:0045259">
    <property type="term" value="C:proton-transporting ATP synthase complex"/>
    <property type="evidence" value="ECO:0007669"/>
    <property type="project" value="UniProtKB-KW"/>
</dbReference>
<dbReference type="GO" id="GO:0005524">
    <property type="term" value="F:ATP binding"/>
    <property type="evidence" value="ECO:0007669"/>
    <property type="project" value="UniProtKB-UniRule"/>
</dbReference>
<dbReference type="GO" id="GO:0046933">
    <property type="term" value="F:proton-transporting ATP synthase activity, rotational mechanism"/>
    <property type="evidence" value="ECO:0007669"/>
    <property type="project" value="UniProtKB-UniRule"/>
</dbReference>
<dbReference type="CDD" id="cd12152">
    <property type="entry name" value="F1-ATPase_delta"/>
    <property type="match status" value="1"/>
</dbReference>
<dbReference type="Gene3D" id="1.20.5.440">
    <property type="entry name" value="ATP synthase delta/epsilon subunit, C-terminal domain"/>
    <property type="match status" value="1"/>
</dbReference>
<dbReference type="Gene3D" id="2.60.15.10">
    <property type="entry name" value="F0F1 ATP synthase delta/epsilon subunit, N-terminal"/>
    <property type="match status" value="1"/>
</dbReference>
<dbReference type="HAMAP" id="MF_00530">
    <property type="entry name" value="ATP_synth_epsil_bac"/>
    <property type="match status" value="1"/>
</dbReference>
<dbReference type="InterPro" id="IPR001469">
    <property type="entry name" value="ATP_synth_F1_dsu/esu"/>
</dbReference>
<dbReference type="InterPro" id="IPR020546">
    <property type="entry name" value="ATP_synth_F1_dsu/esu_N"/>
</dbReference>
<dbReference type="InterPro" id="IPR020547">
    <property type="entry name" value="ATP_synth_F1_esu_C"/>
</dbReference>
<dbReference type="InterPro" id="IPR036771">
    <property type="entry name" value="ATPsynth_dsu/esu_N"/>
</dbReference>
<dbReference type="NCBIfam" id="TIGR01216">
    <property type="entry name" value="ATP_synt_epsi"/>
    <property type="match status" value="1"/>
</dbReference>
<dbReference type="NCBIfam" id="NF001846">
    <property type="entry name" value="PRK00571.1-3"/>
    <property type="match status" value="1"/>
</dbReference>
<dbReference type="PANTHER" id="PTHR13822">
    <property type="entry name" value="ATP SYNTHASE DELTA/EPSILON CHAIN"/>
    <property type="match status" value="1"/>
</dbReference>
<dbReference type="PANTHER" id="PTHR13822:SF10">
    <property type="entry name" value="ATP SYNTHASE EPSILON CHAIN, CHLOROPLASTIC"/>
    <property type="match status" value="1"/>
</dbReference>
<dbReference type="Pfam" id="PF00401">
    <property type="entry name" value="ATP-synt_DE"/>
    <property type="match status" value="1"/>
</dbReference>
<dbReference type="Pfam" id="PF02823">
    <property type="entry name" value="ATP-synt_DE_N"/>
    <property type="match status" value="1"/>
</dbReference>
<dbReference type="SUPFAM" id="SSF51344">
    <property type="entry name" value="Epsilon subunit of F1F0-ATP synthase N-terminal domain"/>
    <property type="match status" value="1"/>
</dbReference>
<name>ATPE_STRE4</name>
<protein>
    <recommendedName>
        <fullName evidence="1">ATP synthase epsilon chain</fullName>
    </recommendedName>
    <alternativeName>
        <fullName evidence="1">ATP synthase F1 sector epsilon subunit</fullName>
    </alternativeName>
    <alternativeName>
        <fullName evidence="1">F-ATPase epsilon subunit</fullName>
    </alternativeName>
</protein>
<gene>
    <name evidence="1" type="primary">atpC</name>
    <name type="ordered locus">SEQ_0922</name>
</gene>
<evidence type="ECO:0000255" key="1">
    <source>
        <dbReference type="HAMAP-Rule" id="MF_00530"/>
    </source>
</evidence>
<reference key="1">
    <citation type="journal article" date="2009" name="PLoS Pathog.">
        <title>Genomic evidence for the evolution of Streptococcus equi: host restriction, increased virulence, and genetic exchange with human pathogens.</title>
        <authorList>
            <person name="Holden M.T.G."/>
            <person name="Heather Z."/>
            <person name="Paillot R."/>
            <person name="Steward K.F."/>
            <person name="Webb K."/>
            <person name="Ainslie F."/>
            <person name="Jourdan T."/>
            <person name="Bason N.C."/>
            <person name="Holroyd N.E."/>
            <person name="Mungall K."/>
            <person name="Quail M.A."/>
            <person name="Sanders M."/>
            <person name="Simmonds M."/>
            <person name="Willey D."/>
            <person name="Brooks K."/>
            <person name="Aanensen D.M."/>
            <person name="Spratt B.G."/>
            <person name="Jolley K.A."/>
            <person name="Maiden M.C.J."/>
            <person name="Kehoe M."/>
            <person name="Chanter N."/>
            <person name="Bentley S.D."/>
            <person name="Robinson C."/>
            <person name="Maskell D.J."/>
            <person name="Parkhill J."/>
            <person name="Waller A.S."/>
        </authorList>
    </citation>
    <scope>NUCLEOTIDE SEQUENCE [LARGE SCALE GENOMIC DNA]</scope>
    <source>
        <strain>4047</strain>
    </source>
</reference>
<sequence>MTQMTVQVVTPDGIKYDHHAKFISVTTPDGEMGILPNHINVIAPLQVHEMKIRRVSEDDRVDWVAINGGIIEIKDNVVTIVADSAERDRDIDVSRAERAKLRAERDIAEAETTHDIDEVRRAKVALRRALNRINVSKK</sequence>
<keyword id="KW-0066">ATP synthesis</keyword>
<keyword id="KW-1003">Cell membrane</keyword>
<keyword id="KW-0139">CF(1)</keyword>
<keyword id="KW-0375">Hydrogen ion transport</keyword>
<keyword id="KW-0406">Ion transport</keyword>
<keyword id="KW-0472">Membrane</keyword>
<keyword id="KW-0813">Transport</keyword>
<feature type="chain" id="PRO_1000146348" description="ATP synthase epsilon chain">
    <location>
        <begin position="1"/>
        <end position="138"/>
    </location>
</feature>
<proteinExistence type="inferred from homology"/>
<accession>C0M721</accession>